<dbReference type="EC" id="4.2.1.19" evidence="1"/>
<dbReference type="EMBL" id="CR555306">
    <property type="protein sequence ID" value="CAI06819.1"/>
    <property type="molecule type" value="Genomic_DNA"/>
</dbReference>
<dbReference type="RefSeq" id="WP_011236547.1">
    <property type="nucleotide sequence ID" value="NC_006513.1"/>
</dbReference>
<dbReference type="SMR" id="Q5P792"/>
<dbReference type="STRING" id="76114.ebA1296"/>
<dbReference type="KEGG" id="eba:ebA1296"/>
<dbReference type="eggNOG" id="COG0131">
    <property type="taxonomic scope" value="Bacteria"/>
</dbReference>
<dbReference type="HOGENOM" id="CLU_044308_2_0_4"/>
<dbReference type="OrthoDB" id="9790411at2"/>
<dbReference type="UniPathway" id="UPA00031">
    <property type="reaction ID" value="UER00011"/>
</dbReference>
<dbReference type="Proteomes" id="UP000006552">
    <property type="component" value="Chromosome"/>
</dbReference>
<dbReference type="GO" id="GO:0005737">
    <property type="term" value="C:cytoplasm"/>
    <property type="evidence" value="ECO:0007669"/>
    <property type="project" value="UniProtKB-SubCell"/>
</dbReference>
<dbReference type="GO" id="GO:0004424">
    <property type="term" value="F:imidazoleglycerol-phosphate dehydratase activity"/>
    <property type="evidence" value="ECO:0007669"/>
    <property type="project" value="UniProtKB-UniRule"/>
</dbReference>
<dbReference type="GO" id="GO:0000105">
    <property type="term" value="P:L-histidine biosynthetic process"/>
    <property type="evidence" value="ECO:0007669"/>
    <property type="project" value="UniProtKB-UniRule"/>
</dbReference>
<dbReference type="CDD" id="cd07914">
    <property type="entry name" value="IGPD"/>
    <property type="match status" value="1"/>
</dbReference>
<dbReference type="FunFam" id="3.30.230.40:FF:000002">
    <property type="entry name" value="Imidazoleglycerol-phosphate dehydratase"/>
    <property type="match status" value="1"/>
</dbReference>
<dbReference type="FunFam" id="3.30.230.40:FF:000003">
    <property type="entry name" value="Imidazoleglycerol-phosphate dehydratase HisB"/>
    <property type="match status" value="1"/>
</dbReference>
<dbReference type="Gene3D" id="3.30.230.40">
    <property type="entry name" value="Imidazole glycerol phosphate dehydratase, domain 1"/>
    <property type="match status" value="2"/>
</dbReference>
<dbReference type="HAMAP" id="MF_00076">
    <property type="entry name" value="HisB"/>
    <property type="match status" value="1"/>
</dbReference>
<dbReference type="InterPro" id="IPR038494">
    <property type="entry name" value="IGPD_sf"/>
</dbReference>
<dbReference type="InterPro" id="IPR000807">
    <property type="entry name" value="ImidazoleglycerolP_deHydtase"/>
</dbReference>
<dbReference type="InterPro" id="IPR020565">
    <property type="entry name" value="ImidazoleglycerP_deHydtase_CS"/>
</dbReference>
<dbReference type="InterPro" id="IPR020568">
    <property type="entry name" value="Ribosomal_Su5_D2-typ_SF"/>
</dbReference>
<dbReference type="NCBIfam" id="NF002106">
    <property type="entry name" value="PRK00951.1-1"/>
    <property type="match status" value="1"/>
</dbReference>
<dbReference type="NCBIfam" id="NF002109">
    <property type="entry name" value="PRK00951.1-5"/>
    <property type="match status" value="1"/>
</dbReference>
<dbReference type="NCBIfam" id="NF002111">
    <property type="entry name" value="PRK00951.2-1"/>
    <property type="match status" value="1"/>
</dbReference>
<dbReference type="NCBIfam" id="NF002114">
    <property type="entry name" value="PRK00951.2-4"/>
    <property type="match status" value="1"/>
</dbReference>
<dbReference type="PANTHER" id="PTHR23133:SF2">
    <property type="entry name" value="IMIDAZOLEGLYCEROL-PHOSPHATE DEHYDRATASE"/>
    <property type="match status" value="1"/>
</dbReference>
<dbReference type="PANTHER" id="PTHR23133">
    <property type="entry name" value="IMIDAZOLEGLYCEROL-PHOSPHATE DEHYDRATASE HIS7"/>
    <property type="match status" value="1"/>
</dbReference>
<dbReference type="Pfam" id="PF00475">
    <property type="entry name" value="IGPD"/>
    <property type="match status" value="1"/>
</dbReference>
<dbReference type="SUPFAM" id="SSF54211">
    <property type="entry name" value="Ribosomal protein S5 domain 2-like"/>
    <property type="match status" value="2"/>
</dbReference>
<dbReference type="PROSITE" id="PS00954">
    <property type="entry name" value="IGP_DEHYDRATASE_1"/>
    <property type="match status" value="1"/>
</dbReference>
<dbReference type="PROSITE" id="PS00955">
    <property type="entry name" value="IGP_DEHYDRATASE_2"/>
    <property type="match status" value="1"/>
</dbReference>
<gene>
    <name evidence="1" type="primary">hisB</name>
    <name type="ordered locus">AZOSEA06960</name>
    <name type="ORF">ebA1296</name>
</gene>
<reference key="1">
    <citation type="journal article" date="2005" name="Arch. Microbiol.">
        <title>The genome sequence of an anaerobic aromatic-degrading denitrifying bacterium, strain EbN1.</title>
        <authorList>
            <person name="Rabus R."/>
            <person name="Kube M."/>
            <person name="Heider J."/>
            <person name="Beck A."/>
            <person name="Heitmann K."/>
            <person name="Widdel F."/>
            <person name="Reinhardt R."/>
        </authorList>
    </citation>
    <scope>NUCLEOTIDE SEQUENCE [LARGE SCALE GENOMIC DNA]</scope>
    <source>
        <strain>DSM 19018 / LMG 30748 / EbN1</strain>
    </source>
</reference>
<evidence type="ECO:0000255" key="1">
    <source>
        <dbReference type="HAMAP-Rule" id="MF_00076"/>
    </source>
</evidence>
<name>HIS7_AROAE</name>
<sequence length="195" mass="21486">MRQAEVTRDTLETRITARVDLDGSGKAAFATGVPFLDHMLDQIARHGAFDLDIRAEGDTHIDDHHTVEDVGITLGQAFARALGDKRGIRRYGHAYVPLDEALSRVVVDFSGRPGLHYFVSYTRARIGSFDVDLAREFFQGFVNHAGVTLHIDSLRGDNAHHQCETIFKAFGRALRMAAERDERAAGAIPSTKGAL</sequence>
<comment type="catalytic activity">
    <reaction evidence="1">
        <text>D-erythro-1-(imidazol-4-yl)glycerol 3-phosphate = 3-(imidazol-4-yl)-2-oxopropyl phosphate + H2O</text>
        <dbReference type="Rhea" id="RHEA:11040"/>
        <dbReference type="ChEBI" id="CHEBI:15377"/>
        <dbReference type="ChEBI" id="CHEBI:57766"/>
        <dbReference type="ChEBI" id="CHEBI:58278"/>
        <dbReference type="EC" id="4.2.1.19"/>
    </reaction>
</comment>
<comment type="pathway">
    <text evidence="1">Amino-acid biosynthesis; L-histidine biosynthesis; L-histidine from 5-phospho-alpha-D-ribose 1-diphosphate: step 6/9.</text>
</comment>
<comment type="subcellular location">
    <subcellularLocation>
        <location evidence="1">Cytoplasm</location>
    </subcellularLocation>
</comment>
<comment type="similarity">
    <text evidence="1">Belongs to the imidazoleglycerol-phosphate dehydratase family.</text>
</comment>
<keyword id="KW-0028">Amino-acid biosynthesis</keyword>
<keyword id="KW-0963">Cytoplasm</keyword>
<keyword id="KW-0368">Histidine biosynthesis</keyword>
<keyword id="KW-0456">Lyase</keyword>
<keyword id="KW-1185">Reference proteome</keyword>
<accession>Q5P792</accession>
<proteinExistence type="inferred from homology"/>
<protein>
    <recommendedName>
        <fullName evidence="1">Imidazoleglycerol-phosphate dehydratase</fullName>
        <shortName evidence="1">IGPD</shortName>
        <ecNumber evidence="1">4.2.1.19</ecNumber>
    </recommendedName>
</protein>
<organism>
    <name type="scientific">Aromatoleum aromaticum (strain DSM 19018 / LMG 30748 / EbN1)</name>
    <name type="common">Azoarcus sp. (strain EbN1)</name>
    <dbReference type="NCBI Taxonomy" id="76114"/>
    <lineage>
        <taxon>Bacteria</taxon>
        <taxon>Pseudomonadati</taxon>
        <taxon>Pseudomonadota</taxon>
        <taxon>Betaproteobacteria</taxon>
        <taxon>Rhodocyclales</taxon>
        <taxon>Rhodocyclaceae</taxon>
        <taxon>Aromatoleum</taxon>
    </lineage>
</organism>
<feature type="chain" id="PRO_0000336296" description="Imidazoleglycerol-phosphate dehydratase">
    <location>
        <begin position="1"/>
        <end position="195"/>
    </location>
</feature>